<evidence type="ECO:0000250" key="1">
    <source>
        <dbReference type="UniProtKB" id="Q91Y80"/>
    </source>
</evidence>
<evidence type="ECO:0000250" key="2">
    <source>
        <dbReference type="UniProtKB" id="Q9Z131"/>
    </source>
</evidence>
<evidence type="ECO:0000256" key="3">
    <source>
        <dbReference type="SAM" id="MobiDB-lite"/>
    </source>
</evidence>
<evidence type="ECO:0000269" key="4">
    <source>
    </source>
</evidence>
<evidence type="ECO:0000269" key="5">
    <source>
    </source>
</evidence>
<evidence type="ECO:0000269" key="6">
    <source>
    </source>
</evidence>
<evidence type="ECO:0000269" key="7">
    <source>
    </source>
</evidence>
<evidence type="ECO:0000269" key="8">
    <source>
    </source>
</evidence>
<evidence type="ECO:0000303" key="9">
    <source>
    </source>
</evidence>
<evidence type="ECO:0000305" key="10"/>
<evidence type="ECO:0007744" key="11">
    <source>
        <dbReference type="PDB" id="6DJL"/>
    </source>
</evidence>
<evidence type="ECO:0007744" key="12">
    <source>
    </source>
</evidence>
<evidence type="ECO:0007744" key="13">
    <source>
    </source>
</evidence>
<evidence type="ECO:0007829" key="14">
    <source>
        <dbReference type="PDB" id="6DJL"/>
    </source>
</evidence>
<proteinExistence type="evidence at protein level"/>
<sequence>MDAALKRSRSEEPAEILPPARDEEEEEEEGMEQGLEEEEEVDPRIQGELEKLNQSTDDINRRETELEDARQKFRSVLVEATVKLDELVKKIGKAVEDSKPYWEARRVARQAQLEAQKATQDFQRATEVLRAAKETISLAEQRLLEDDKRQFDSAWQEMLNHATQRVMEAEQTKTRSELVHKETAARYNAAMGRMRQLEKKLKRAINKSKPYFELKAKYYVQLEQLKKTVDDLQAKLTLAKGEYKMALKNLEMISDEIHERRRSSAMGPRGCGVGAEGSSTSVEDLPGSKPEPDAISVASEAFEDDSCSNFVSEDDSETQSVSSFSSGPTSPSEMPDQFPAVVRPGSLDLPSPVSLSEFGMMFPVLGPRSECSGASSPECEVERGDRAEGAENKTSDKANNNRGLSSSSGSGGSSKSQSSTSPEGQALENRMKQLSLQCSKGRDGIIADIKMVQIG</sequence>
<name>3BP5_HUMAN</name>
<gene>
    <name type="primary">SH3BP5</name>
    <name type="synonym">SAB</name>
</gene>
<feature type="chain" id="PRO_0000064368" description="SH3 domain-binding protein 5">
    <location>
        <begin position="1"/>
        <end position="455"/>
    </location>
</feature>
<feature type="region of interest" description="Disordered" evidence="3">
    <location>
        <begin position="1"/>
        <end position="63"/>
    </location>
</feature>
<feature type="region of interest" description="Sufficient for interaction with RAB11A and for guanine nucleotide exchange activity" evidence="7">
    <location>
        <begin position="31"/>
        <end position="265"/>
    </location>
</feature>
<feature type="region of interest" description="Disordered" evidence="3">
    <location>
        <begin position="259"/>
        <end position="293"/>
    </location>
</feature>
<feature type="region of interest" description="Disordered" evidence="3">
    <location>
        <begin position="306"/>
        <end position="345"/>
    </location>
</feature>
<feature type="region of interest" description="Disordered" evidence="3">
    <location>
        <begin position="369"/>
        <end position="435"/>
    </location>
</feature>
<feature type="coiled-coil region" evidence="7">
    <location>
        <begin position="44"/>
        <end position="90"/>
    </location>
</feature>
<feature type="coiled-coil region" evidence="7">
    <location>
        <begin position="97"/>
        <end position="145"/>
    </location>
</feature>
<feature type="coiled-coil region" evidence="7">
    <location>
        <begin position="154"/>
        <end position="200"/>
    </location>
</feature>
<feature type="coiled-coil region" evidence="7">
    <location>
        <begin position="211"/>
        <end position="255"/>
    </location>
</feature>
<feature type="compositionally biased region" description="Basic and acidic residues" evidence="3">
    <location>
        <begin position="1"/>
        <end position="12"/>
    </location>
</feature>
<feature type="compositionally biased region" description="Acidic residues" evidence="3">
    <location>
        <begin position="22"/>
        <end position="41"/>
    </location>
</feature>
<feature type="compositionally biased region" description="Basic and acidic residues" evidence="3">
    <location>
        <begin position="42"/>
        <end position="51"/>
    </location>
</feature>
<feature type="compositionally biased region" description="Acidic residues" evidence="3">
    <location>
        <begin position="306"/>
        <end position="317"/>
    </location>
</feature>
<feature type="compositionally biased region" description="Low complexity" evidence="3">
    <location>
        <begin position="320"/>
        <end position="332"/>
    </location>
</feature>
<feature type="compositionally biased region" description="Basic and acidic residues" evidence="3">
    <location>
        <begin position="380"/>
        <end position="396"/>
    </location>
</feature>
<feature type="compositionally biased region" description="Low complexity" evidence="3">
    <location>
        <begin position="403"/>
        <end position="421"/>
    </location>
</feature>
<feature type="modified residue" description="Phosphoserine; by MAPK12 and MAPK9" evidence="1">
    <location>
        <position position="351"/>
    </location>
</feature>
<feature type="modified residue" description="Phosphoserine" evidence="2">
    <location>
        <position position="375"/>
    </location>
</feature>
<feature type="modified residue" description="Phosphoserine" evidence="2">
    <location>
        <position position="376"/>
    </location>
</feature>
<feature type="modified residue" description="Phosphoserine" evidence="1">
    <location>
        <position position="418"/>
    </location>
</feature>
<feature type="modified residue" description="Phosphoserine" evidence="12 13">
    <location>
        <position position="421"/>
    </location>
</feature>
<feature type="splice variant" id="VSP_042854" description="In isoform 2." evidence="9">
    <location>
        <begin position="1"/>
        <end position="157"/>
    </location>
</feature>
<feature type="mutagenesis site" description="Loss of guanine nucleotide exchange factor activity." evidence="7">
    <original>LNQ</original>
    <variation>AAA</variation>
    <location>
        <begin position="52"/>
        <end position="54"/>
    </location>
</feature>
<feature type="mutagenesis site" description="Loss of guanine nucleotide exchange factor activity." evidence="7">
    <original>LE</original>
    <variation>AK</variation>
    <location>
        <begin position="250"/>
        <end position="251"/>
    </location>
</feature>
<feature type="mutagenesis site" description="Loss of phosphorylation and binding by phospho-JNK; when associated with A-349." evidence="5">
    <original>L</original>
    <variation>A</variation>
    <location>
        <position position="347"/>
    </location>
</feature>
<feature type="mutagenesis site" description="Loss of phosphorylation and binding by phospho-JNK; when associated with A-347." evidence="5">
    <original>L</original>
    <variation>A</variation>
    <location>
        <position position="349"/>
    </location>
</feature>
<feature type="mutagenesis site" description="No change of phosphorylation or binding by phospho-JNK; when associated with A-436." evidence="5">
    <original>L</original>
    <variation>A</variation>
    <location>
        <position position="434"/>
    </location>
</feature>
<feature type="mutagenesis site" description="No change of phosphorylation or binding by phospho-JNK; when associated with A-434." evidence="5">
    <original>L</original>
    <variation>A</variation>
    <location>
        <position position="436"/>
    </location>
</feature>
<feature type="helix" evidence="14">
    <location>
        <begin position="44"/>
        <end position="91"/>
    </location>
</feature>
<feature type="turn" evidence="14">
    <location>
        <begin position="93"/>
        <end position="95"/>
    </location>
</feature>
<feature type="helix" evidence="14">
    <location>
        <begin position="96"/>
        <end position="98"/>
    </location>
</feature>
<feature type="helix" evidence="14">
    <location>
        <begin position="99"/>
        <end position="145"/>
    </location>
</feature>
<feature type="helix" evidence="14">
    <location>
        <begin position="147"/>
        <end position="151"/>
    </location>
</feature>
<feature type="helix" evidence="14">
    <location>
        <begin position="153"/>
        <end position="200"/>
    </location>
</feature>
<feature type="helix" evidence="14">
    <location>
        <begin position="202"/>
        <end position="260"/>
    </location>
</feature>
<comment type="function">
    <text evidence="4 6 7 8">Functions as a guanine nucleotide exchange factor (GEF) with specificity for RAB11A and RAB25 (PubMed:26506309, PubMed:30217979). Inhibits the auto- and transphosphorylation activity of BTK. Plays a negative regulatory role in BTK-related cytoplasmic signaling in B-cells. May be involved in BCR-induced apoptotic cell death.</text>
</comment>
<comment type="subunit">
    <text evidence="4 5 6 7 8">Interacts with BTK (PubMed:10339589, PubMed:9571151). Interacts with all isoforms of MAPK8, MAPK9, MAPK10 and MAPK12 (PubMed:12167088). Interacts with GDP-bound and nucleotide-free forms of RAB11A (PubMed:26506309, PubMed:30217979).</text>
</comment>
<comment type="interaction">
    <interactant intactId="EBI-624860">
        <id>O60239</id>
    </interactant>
    <interactant intactId="EBI-624835">
        <id>Q06187</id>
        <label>BTK</label>
    </interactant>
    <organismsDiffer>false</organismsDiffer>
    <experiments>4</experiments>
</comment>
<comment type="interaction">
    <interactant intactId="EBI-624860">
        <id>O60239</id>
    </interactant>
    <interactant intactId="EBI-9091197">
        <id>Q8IY31-3</id>
        <label>IFT20</label>
    </interactant>
    <organismsDiffer>false</organismsDiffer>
    <experiments>3</experiments>
</comment>
<comment type="interaction">
    <interactant intactId="EBI-624860">
        <id>O60239</id>
    </interactant>
    <interactant intactId="EBI-3911716">
        <id>Q9ULW6</id>
        <label>NAP1L2</label>
    </interactant>
    <organismsDiffer>false</organismsDiffer>
    <experiments>3</experiments>
</comment>
<comment type="subcellular location">
    <subcellularLocation>
        <location evidence="7">Cytoplasmic vesicle membrane</location>
        <topology evidence="7">Peripheral membrane protein</topology>
    </subcellularLocation>
    <subcellularLocation>
        <location evidence="5">Mitochondrion</location>
    </subcellularLocation>
    <text evidence="7">Colocalizes with RAB11A on cytoplasmic vesicle membranes.</text>
</comment>
<comment type="alternative products">
    <event type="alternative splicing"/>
    <isoform>
        <id>O60239-1</id>
        <name>1</name>
        <sequence type="displayed"/>
    </isoform>
    <isoform>
        <id>O60239-2</id>
        <name>2</name>
        <sequence type="described" ref="VSP_042854"/>
    </isoform>
</comment>
<comment type="tissue specificity">
    <text evidence="8">Highly expressed in testis and ovaries. It is also expressed in a variety of tissues including spleen, lymph node, thymus, bone marrow, fetal liver, colon, small intestine and prostate.</text>
</comment>
<comment type="domain">
    <text evidence="7">The N-terminal half of the protein mediates interaction with RAB11A and functions as a guanine nucleotide exchange factor. Four long alpha-helices (interrupted by a central kink) assemble into coiled coils, giving rise to a 'V' shape.</text>
</comment>
<comment type="similarity">
    <text evidence="10">Belongs to the SH3BP5 family.</text>
</comment>
<comment type="sequence caution" evidence="10">
    <conflict type="erroneous initiation">
        <sequence resource="EMBL-CDS" id="BAA25922"/>
    </conflict>
</comment>
<dbReference type="EMBL" id="AK090524">
    <property type="protein sequence ID" value="BAG52178.1"/>
    <property type="molecule type" value="mRNA"/>
</dbReference>
<dbReference type="EMBL" id="AC087590">
    <property type="status" value="NOT_ANNOTATED_CDS"/>
    <property type="molecule type" value="Genomic_DNA"/>
</dbReference>
<dbReference type="EMBL" id="AL117422">
    <property type="protein sequence ID" value="CAI46220.1"/>
    <property type="molecule type" value="mRNA"/>
</dbReference>
<dbReference type="EMBL" id="CH471055">
    <property type="protein sequence ID" value="EAW64225.1"/>
    <property type="molecule type" value="Genomic_DNA"/>
</dbReference>
<dbReference type="EMBL" id="BC010123">
    <property type="protein sequence ID" value="AAH10123.2"/>
    <property type="molecule type" value="mRNA"/>
</dbReference>
<dbReference type="EMBL" id="AB005047">
    <property type="protein sequence ID" value="BAA25922.1"/>
    <property type="status" value="ALT_INIT"/>
    <property type="molecule type" value="mRNA"/>
</dbReference>
<dbReference type="CCDS" id="CCDS2625.2">
    <molecule id="O60239-1"/>
</dbReference>
<dbReference type="CCDS" id="CCDS43055.1">
    <molecule id="O60239-2"/>
</dbReference>
<dbReference type="PIR" id="JE0086">
    <property type="entry name" value="JE0086"/>
</dbReference>
<dbReference type="RefSeq" id="NP_001018009.2">
    <molecule id="O60239-2"/>
    <property type="nucleotide sequence ID" value="NM_001018009.4"/>
</dbReference>
<dbReference type="RefSeq" id="NP_004835.2">
    <molecule id="O60239-1"/>
    <property type="nucleotide sequence ID" value="NM_004844.5"/>
</dbReference>
<dbReference type="RefSeq" id="XP_016863011.1">
    <property type="nucleotide sequence ID" value="XM_017007522.1"/>
</dbReference>
<dbReference type="RefSeq" id="XP_016863012.1">
    <property type="nucleotide sequence ID" value="XM_017007523.1"/>
</dbReference>
<dbReference type="RefSeq" id="XP_016863013.1">
    <property type="nucleotide sequence ID" value="XM_017007524.1"/>
</dbReference>
<dbReference type="RefSeq" id="XP_016863014.1">
    <property type="nucleotide sequence ID" value="XM_017007525.1"/>
</dbReference>
<dbReference type="RefSeq" id="XP_047305200.1">
    <molecule id="O60239-2"/>
    <property type="nucleotide sequence ID" value="XM_047449244.1"/>
</dbReference>
<dbReference type="RefSeq" id="XP_047305201.1">
    <molecule id="O60239-2"/>
    <property type="nucleotide sequence ID" value="XM_047449245.1"/>
</dbReference>
<dbReference type="RefSeq" id="XP_054204429.1">
    <molecule id="O60239-2"/>
    <property type="nucleotide sequence ID" value="XM_054348454.1"/>
</dbReference>
<dbReference type="RefSeq" id="XP_054204430.1">
    <molecule id="O60239-2"/>
    <property type="nucleotide sequence ID" value="XM_054348455.1"/>
</dbReference>
<dbReference type="PDB" id="4H3B">
    <property type="method" value="X-ray"/>
    <property type="resolution" value="2.08 A"/>
    <property type="chains" value="B/D=341-350"/>
</dbReference>
<dbReference type="PDB" id="6DJL">
    <property type="method" value="X-ray"/>
    <property type="resolution" value="3.10 A"/>
    <property type="chains" value="B/C/D/E=1-265"/>
</dbReference>
<dbReference type="PDB" id="6IXE">
    <property type="method" value="X-ray"/>
    <property type="resolution" value="3.35 A"/>
    <property type="chains" value="A=41-266"/>
</dbReference>
<dbReference type="PDB" id="6IXF">
    <property type="method" value="X-ray"/>
    <property type="resolution" value="3.60 A"/>
    <property type="chains" value="A/B=41-266"/>
</dbReference>
<dbReference type="PDB" id="6IXG">
    <property type="method" value="X-ray"/>
    <property type="resolution" value="3.80 A"/>
    <property type="chains" value="A/B=41-266"/>
</dbReference>
<dbReference type="PDB" id="6IXV">
    <property type="method" value="X-ray"/>
    <property type="resolution" value="3.80 A"/>
    <property type="chains" value="A/B/C/D=10-276"/>
</dbReference>
<dbReference type="PDBsum" id="4H3B"/>
<dbReference type="PDBsum" id="6DJL"/>
<dbReference type="PDBsum" id="6IXE"/>
<dbReference type="PDBsum" id="6IXF"/>
<dbReference type="PDBsum" id="6IXG"/>
<dbReference type="PDBsum" id="6IXV"/>
<dbReference type="SMR" id="O60239"/>
<dbReference type="BioGRID" id="114853">
    <property type="interactions" value="28"/>
</dbReference>
<dbReference type="ELM" id="O60239"/>
<dbReference type="FunCoup" id="O60239">
    <property type="interactions" value="1493"/>
</dbReference>
<dbReference type="IntAct" id="O60239">
    <property type="interactions" value="23"/>
</dbReference>
<dbReference type="STRING" id="9606.ENSP00000373301"/>
<dbReference type="GlyGen" id="O60239">
    <property type="glycosylation" value="1 site"/>
</dbReference>
<dbReference type="iPTMnet" id="O60239"/>
<dbReference type="PhosphoSitePlus" id="O60239"/>
<dbReference type="BioMuta" id="SH3BP5"/>
<dbReference type="jPOST" id="O60239"/>
<dbReference type="MassIVE" id="O60239"/>
<dbReference type="PaxDb" id="9606-ENSP00000373301"/>
<dbReference type="PeptideAtlas" id="O60239"/>
<dbReference type="ProteomicsDB" id="49268">
    <molecule id="O60239-1"/>
</dbReference>
<dbReference type="ProteomicsDB" id="49269">
    <molecule id="O60239-2"/>
</dbReference>
<dbReference type="Pumba" id="O60239"/>
<dbReference type="TopDownProteomics" id="O60239-1">
    <molecule id="O60239-1"/>
</dbReference>
<dbReference type="Antibodypedia" id="26718">
    <property type="antibodies" value="161 antibodies from 26 providers"/>
</dbReference>
<dbReference type="DNASU" id="9467"/>
<dbReference type="Ensembl" id="ENST00000383791.8">
    <molecule id="O60239-1"/>
    <property type="protein sequence ID" value="ENSP00000373301.3"/>
    <property type="gene ID" value="ENSG00000131370.16"/>
</dbReference>
<dbReference type="Ensembl" id="ENST00000408919.7">
    <molecule id="O60239-2"/>
    <property type="protein sequence ID" value="ENSP00000386231.3"/>
    <property type="gene ID" value="ENSG00000131370.16"/>
</dbReference>
<dbReference type="Ensembl" id="ENST00000426925.5">
    <molecule id="O60239-2"/>
    <property type="protein sequence ID" value="ENSP00000388553.1"/>
    <property type="gene ID" value="ENSG00000131370.16"/>
</dbReference>
<dbReference type="GeneID" id="9467"/>
<dbReference type="KEGG" id="hsa:9467"/>
<dbReference type="MANE-Select" id="ENST00000383791.8">
    <property type="protein sequence ID" value="ENSP00000373301.3"/>
    <property type="RefSeq nucleotide sequence ID" value="NM_004844.5"/>
    <property type="RefSeq protein sequence ID" value="NP_004835.2"/>
</dbReference>
<dbReference type="UCSC" id="uc003bzp.3">
    <molecule id="O60239-1"/>
    <property type="organism name" value="human"/>
</dbReference>
<dbReference type="AGR" id="HGNC:10827"/>
<dbReference type="CTD" id="9467"/>
<dbReference type="DisGeNET" id="9467"/>
<dbReference type="GeneCards" id="SH3BP5"/>
<dbReference type="HGNC" id="HGNC:10827">
    <property type="gene designation" value="SH3BP5"/>
</dbReference>
<dbReference type="HPA" id="ENSG00000131370">
    <property type="expression patterns" value="Low tissue specificity"/>
</dbReference>
<dbReference type="MalaCards" id="SH3BP5"/>
<dbReference type="MIM" id="605612">
    <property type="type" value="gene"/>
</dbReference>
<dbReference type="neXtProt" id="NX_O60239"/>
<dbReference type="OpenTargets" id="ENSG00000131370"/>
<dbReference type="PharmGKB" id="PA35735"/>
<dbReference type="VEuPathDB" id="HostDB:ENSG00000131370"/>
<dbReference type="eggNOG" id="KOG2008">
    <property type="taxonomic scope" value="Eukaryota"/>
</dbReference>
<dbReference type="GeneTree" id="ENSGT00390000018500"/>
<dbReference type="HOGENOM" id="CLU_048895_1_0_1"/>
<dbReference type="InParanoid" id="O60239"/>
<dbReference type="OMA" id="ECFDDEP"/>
<dbReference type="OrthoDB" id="446789at2759"/>
<dbReference type="PAN-GO" id="O60239">
    <property type="GO annotations" value="4 GO annotations based on evolutionary models"/>
</dbReference>
<dbReference type="PhylomeDB" id="O60239"/>
<dbReference type="TreeFam" id="TF105573"/>
<dbReference type="PathwayCommons" id="O60239"/>
<dbReference type="SignaLink" id="O60239"/>
<dbReference type="SIGNOR" id="O60239"/>
<dbReference type="BioGRID-ORCS" id="9467">
    <property type="hits" value="16 hits in 1159 CRISPR screens"/>
</dbReference>
<dbReference type="ChiTaRS" id="SH3BP5">
    <property type="organism name" value="human"/>
</dbReference>
<dbReference type="EvolutionaryTrace" id="O60239"/>
<dbReference type="GeneWiki" id="SH3BP5"/>
<dbReference type="GenomeRNAi" id="9467"/>
<dbReference type="Pharos" id="O60239">
    <property type="development level" value="Tbio"/>
</dbReference>
<dbReference type="PRO" id="PR:O60239"/>
<dbReference type="Proteomes" id="UP000005640">
    <property type="component" value="Chromosome 3"/>
</dbReference>
<dbReference type="RNAct" id="O60239">
    <property type="molecule type" value="protein"/>
</dbReference>
<dbReference type="Bgee" id="ENSG00000131370">
    <property type="expression patterns" value="Expressed in adrenal tissue and 213 other cell types or tissues"/>
</dbReference>
<dbReference type="ExpressionAtlas" id="O60239">
    <property type="expression patterns" value="baseline and differential"/>
</dbReference>
<dbReference type="GO" id="GO:0005737">
    <property type="term" value="C:cytoplasm"/>
    <property type="evidence" value="ECO:0000318"/>
    <property type="project" value="GO_Central"/>
</dbReference>
<dbReference type="GO" id="GO:0030659">
    <property type="term" value="C:cytoplasmic vesicle membrane"/>
    <property type="evidence" value="ECO:0000314"/>
    <property type="project" value="UniProtKB"/>
</dbReference>
<dbReference type="GO" id="GO:0005739">
    <property type="term" value="C:mitochondrion"/>
    <property type="evidence" value="ECO:0007669"/>
    <property type="project" value="UniProtKB-SubCell"/>
</dbReference>
<dbReference type="GO" id="GO:0016604">
    <property type="term" value="C:nuclear body"/>
    <property type="evidence" value="ECO:0000314"/>
    <property type="project" value="HPA"/>
</dbReference>
<dbReference type="GO" id="GO:0005654">
    <property type="term" value="C:nucleoplasm"/>
    <property type="evidence" value="ECO:0000314"/>
    <property type="project" value="HPA"/>
</dbReference>
<dbReference type="GO" id="GO:0005085">
    <property type="term" value="F:guanyl-nucleotide exchange factor activity"/>
    <property type="evidence" value="ECO:0000314"/>
    <property type="project" value="UniProtKB"/>
</dbReference>
<dbReference type="GO" id="GO:0004860">
    <property type="term" value="F:protein kinase inhibitor activity"/>
    <property type="evidence" value="ECO:0000314"/>
    <property type="project" value="MGI"/>
</dbReference>
<dbReference type="GO" id="GO:0017124">
    <property type="term" value="F:SH3 domain binding"/>
    <property type="evidence" value="ECO:0007669"/>
    <property type="project" value="UniProtKB-KW"/>
</dbReference>
<dbReference type="GO" id="GO:0035556">
    <property type="term" value="P:intracellular signal transduction"/>
    <property type="evidence" value="ECO:0000314"/>
    <property type="project" value="MGI"/>
</dbReference>
<dbReference type="GO" id="GO:0007165">
    <property type="term" value="P:signal transduction"/>
    <property type="evidence" value="ECO:0000304"/>
    <property type="project" value="ProtInc"/>
</dbReference>
<dbReference type="DisProt" id="DP02850"/>
<dbReference type="IDEAL" id="IID00507"/>
<dbReference type="InterPro" id="IPR007940">
    <property type="entry name" value="SH3BP5"/>
</dbReference>
<dbReference type="PANTHER" id="PTHR19423">
    <property type="entry name" value="SH3 DOMAIN-BINDING PROTEIN 5"/>
    <property type="match status" value="1"/>
</dbReference>
<dbReference type="PANTHER" id="PTHR19423:SF1">
    <property type="entry name" value="SH3 DOMAIN-BINDING PROTEIN 5"/>
    <property type="match status" value="1"/>
</dbReference>
<dbReference type="Pfam" id="PF05276">
    <property type="entry name" value="SH3BP5"/>
    <property type="match status" value="1"/>
</dbReference>
<organism>
    <name type="scientific">Homo sapiens</name>
    <name type="common">Human</name>
    <dbReference type="NCBI Taxonomy" id="9606"/>
    <lineage>
        <taxon>Eukaryota</taxon>
        <taxon>Metazoa</taxon>
        <taxon>Chordata</taxon>
        <taxon>Craniata</taxon>
        <taxon>Vertebrata</taxon>
        <taxon>Euteleostomi</taxon>
        <taxon>Mammalia</taxon>
        <taxon>Eutheria</taxon>
        <taxon>Euarchontoglires</taxon>
        <taxon>Primates</taxon>
        <taxon>Haplorrhini</taxon>
        <taxon>Catarrhini</taxon>
        <taxon>Hominidae</taxon>
        <taxon>Homo</taxon>
    </lineage>
</organism>
<reference key="1">
    <citation type="journal article" date="2007" name="BMC Genomics">
        <title>The full-ORF clone resource of the German cDNA consortium.</title>
        <authorList>
            <person name="Bechtel S."/>
            <person name="Rosenfelder H."/>
            <person name="Duda A."/>
            <person name="Schmidt C.P."/>
            <person name="Ernst U."/>
            <person name="Wellenreuther R."/>
            <person name="Mehrle A."/>
            <person name="Schuster C."/>
            <person name="Bahr A."/>
            <person name="Bloecker H."/>
            <person name="Heubner D."/>
            <person name="Hoerlein A."/>
            <person name="Michel G."/>
            <person name="Wedler H."/>
            <person name="Koehrer K."/>
            <person name="Ottenwaelder B."/>
            <person name="Poustka A."/>
            <person name="Wiemann S."/>
            <person name="Schupp I."/>
        </authorList>
    </citation>
    <scope>NUCLEOTIDE SEQUENCE [LARGE SCALE MRNA] (ISOFORM 1)</scope>
    <source>
        <tissue>Uterus</tissue>
    </source>
</reference>
<reference key="2">
    <citation type="journal article" date="2004" name="Nat. Genet.">
        <title>Complete sequencing and characterization of 21,243 full-length human cDNAs.</title>
        <authorList>
            <person name="Ota T."/>
            <person name="Suzuki Y."/>
            <person name="Nishikawa T."/>
            <person name="Otsuki T."/>
            <person name="Sugiyama T."/>
            <person name="Irie R."/>
            <person name="Wakamatsu A."/>
            <person name="Hayashi K."/>
            <person name="Sato H."/>
            <person name="Nagai K."/>
            <person name="Kimura K."/>
            <person name="Makita H."/>
            <person name="Sekine M."/>
            <person name="Obayashi M."/>
            <person name="Nishi T."/>
            <person name="Shibahara T."/>
            <person name="Tanaka T."/>
            <person name="Ishii S."/>
            <person name="Yamamoto J."/>
            <person name="Saito K."/>
            <person name="Kawai Y."/>
            <person name="Isono Y."/>
            <person name="Nakamura Y."/>
            <person name="Nagahari K."/>
            <person name="Murakami K."/>
            <person name="Yasuda T."/>
            <person name="Iwayanagi T."/>
            <person name="Wagatsuma M."/>
            <person name="Shiratori A."/>
            <person name="Sudo H."/>
            <person name="Hosoiri T."/>
            <person name="Kaku Y."/>
            <person name="Kodaira H."/>
            <person name="Kondo H."/>
            <person name="Sugawara M."/>
            <person name="Takahashi M."/>
            <person name="Kanda K."/>
            <person name="Yokoi T."/>
            <person name="Furuya T."/>
            <person name="Kikkawa E."/>
            <person name="Omura Y."/>
            <person name="Abe K."/>
            <person name="Kamihara K."/>
            <person name="Katsuta N."/>
            <person name="Sato K."/>
            <person name="Tanikawa M."/>
            <person name="Yamazaki M."/>
            <person name="Ninomiya K."/>
            <person name="Ishibashi T."/>
            <person name="Yamashita H."/>
            <person name="Murakawa K."/>
            <person name="Fujimori K."/>
            <person name="Tanai H."/>
            <person name="Kimata M."/>
            <person name="Watanabe M."/>
            <person name="Hiraoka S."/>
            <person name="Chiba Y."/>
            <person name="Ishida S."/>
            <person name="Ono Y."/>
            <person name="Takiguchi S."/>
            <person name="Watanabe S."/>
            <person name="Yosida M."/>
            <person name="Hotuta T."/>
            <person name="Kusano J."/>
            <person name="Kanehori K."/>
            <person name="Takahashi-Fujii A."/>
            <person name="Hara H."/>
            <person name="Tanase T.-O."/>
            <person name="Nomura Y."/>
            <person name="Togiya S."/>
            <person name="Komai F."/>
            <person name="Hara R."/>
            <person name="Takeuchi K."/>
            <person name="Arita M."/>
            <person name="Imose N."/>
            <person name="Musashino K."/>
            <person name="Yuuki H."/>
            <person name="Oshima A."/>
            <person name="Sasaki N."/>
            <person name="Aotsuka S."/>
            <person name="Yoshikawa Y."/>
            <person name="Matsunawa H."/>
            <person name="Ichihara T."/>
            <person name="Shiohata N."/>
            <person name="Sano S."/>
            <person name="Moriya S."/>
            <person name="Momiyama H."/>
            <person name="Satoh N."/>
            <person name="Takami S."/>
            <person name="Terashima Y."/>
            <person name="Suzuki O."/>
            <person name="Nakagawa S."/>
            <person name="Senoh A."/>
            <person name="Mizoguchi H."/>
            <person name="Goto Y."/>
            <person name="Shimizu F."/>
            <person name="Wakebe H."/>
            <person name="Hishigaki H."/>
            <person name="Watanabe T."/>
            <person name="Sugiyama A."/>
            <person name="Takemoto M."/>
            <person name="Kawakami B."/>
            <person name="Yamazaki M."/>
            <person name="Watanabe K."/>
            <person name="Kumagai A."/>
            <person name="Itakura S."/>
            <person name="Fukuzumi Y."/>
            <person name="Fujimori Y."/>
            <person name="Komiyama M."/>
            <person name="Tashiro H."/>
            <person name="Tanigami A."/>
            <person name="Fujiwara T."/>
            <person name="Ono T."/>
            <person name="Yamada K."/>
            <person name="Fujii Y."/>
            <person name="Ozaki K."/>
            <person name="Hirao M."/>
            <person name="Ohmori Y."/>
            <person name="Kawabata A."/>
            <person name="Hikiji T."/>
            <person name="Kobatake N."/>
            <person name="Inagaki H."/>
            <person name="Ikema Y."/>
            <person name="Okamoto S."/>
            <person name="Okitani R."/>
            <person name="Kawakami T."/>
            <person name="Noguchi S."/>
            <person name="Itoh T."/>
            <person name="Shigeta K."/>
            <person name="Senba T."/>
            <person name="Matsumura K."/>
            <person name="Nakajima Y."/>
            <person name="Mizuno T."/>
            <person name="Morinaga M."/>
            <person name="Sasaki M."/>
            <person name="Togashi T."/>
            <person name="Oyama M."/>
            <person name="Hata H."/>
            <person name="Watanabe M."/>
            <person name="Komatsu T."/>
            <person name="Mizushima-Sugano J."/>
            <person name="Satoh T."/>
            <person name="Shirai Y."/>
            <person name="Takahashi Y."/>
            <person name="Nakagawa K."/>
            <person name="Okumura K."/>
            <person name="Nagase T."/>
            <person name="Nomura N."/>
            <person name="Kikuchi H."/>
            <person name="Masuho Y."/>
            <person name="Yamashita R."/>
            <person name="Nakai K."/>
            <person name="Yada T."/>
            <person name="Nakamura Y."/>
            <person name="Ohara O."/>
            <person name="Isogai T."/>
            <person name="Sugano S."/>
        </authorList>
    </citation>
    <scope>NUCLEOTIDE SEQUENCE [LARGE SCALE MRNA] (ISOFORM 2)</scope>
    <source>
        <tissue>Adrenal gland</tissue>
    </source>
</reference>
<reference key="3">
    <citation type="journal article" date="2006" name="Nature">
        <title>The DNA sequence, annotation and analysis of human chromosome 3.</title>
        <authorList>
            <person name="Muzny D.M."/>
            <person name="Scherer S.E."/>
            <person name="Kaul R."/>
            <person name="Wang J."/>
            <person name="Yu J."/>
            <person name="Sudbrak R."/>
            <person name="Buhay C.J."/>
            <person name="Chen R."/>
            <person name="Cree A."/>
            <person name="Ding Y."/>
            <person name="Dugan-Rocha S."/>
            <person name="Gill R."/>
            <person name="Gunaratne P."/>
            <person name="Harris R.A."/>
            <person name="Hawes A.C."/>
            <person name="Hernandez J."/>
            <person name="Hodgson A.V."/>
            <person name="Hume J."/>
            <person name="Jackson A."/>
            <person name="Khan Z.M."/>
            <person name="Kovar-Smith C."/>
            <person name="Lewis L.R."/>
            <person name="Lozado R.J."/>
            <person name="Metzker M.L."/>
            <person name="Milosavljevic A."/>
            <person name="Miner G.R."/>
            <person name="Morgan M.B."/>
            <person name="Nazareth L.V."/>
            <person name="Scott G."/>
            <person name="Sodergren E."/>
            <person name="Song X.-Z."/>
            <person name="Steffen D."/>
            <person name="Wei S."/>
            <person name="Wheeler D.A."/>
            <person name="Wright M.W."/>
            <person name="Worley K.C."/>
            <person name="Yuan Y."/>
            <person name="Zhang Z."/>
            <person name="Adams C.Q."/>
            <person name="Ansari-Lari M.A."/>
            <person name="Ayele M."/>
            <person name="Brown M.J."/>
            <person name="Chen G."/>
            <person name="Chen Z."/>
            <person name="Clendenning J."/>
            <person name="Clerc-Blankenburg K.P."/>
            <person name="Chen R."/>
            <person name="Chen Z."/>
            <person name="Davis C."/>
            <person name="Delgado O."/>
            <person name="Dinh H.H."/>
            <person name="Dong W."/>
            <person name="Draper H."/>
            <person name="Ernst S."/>
            <person name="Fu G."/>
            <person name="Gonzalez-Garay M.L."/>
            <person name="Garcia D.K."/>
            <person name="Gillett W."/>
            <person name="Gu J."/>
            <person name="Hao B."/>
            <person name="Haugen E."/>
            <person name="Havlak P."/>
            <person name="He X."/>
            <person name="Hennig S."/>
            <person name="Hu S."/>
            <person name="Huang W."/>
            <person name="Jackson L.R."/>
            <person name="Jacob L.S."/>
            <person name="Kelly S.H."/>
            <person name="Kube M."/>
            <person name="Levy R."/>
            <person name="Li Z."/>
            <person name="Liu B."/>
            <person name="Liu J."/>
            <person name="Liu W."/>
            <person name="Lu J."/>
            <person name="Maheshwari M."/>
            <person name="Nguyen B.-V."/>
            <person name="Okwuonu G.O."/>
            <person name="Palmeiri A."/>
            <person name="Pasternak S."/>
            <person name="Perez L.M."/>
            <person name="Phelps K.A."/>
            <person name="Plopper F.J."/>
            <person name="Qiang B."/>
            <person name="Raymond C."/>
            <person name="Rodriguez R."/>
            <person name="Saenphimmachak C."/>
            <person name="Santibanez J."/>
            <person name="Shen H."/>
            <person name="Shen Y."/>
            <person name="Subramanian S."/>
            <person name="Tabor P.E."/>
            <person name="Verduzco D."/>
            <person name="Waldron L."/>
            <person name="Wang J."/>
            <person name="Wang J."/>
            <person name="Wang Q."/>
            <person name="Williams G.A."/>
            <person name="Wong G.K.-S."/>
            <person name="Yao Z."/>
            <person name="Zhang J."/>
            <person name="Zhang X."/>
            <person name="Zhao G."/>
            <person name="Zhou J."/>
            <person name="Zhou Y."/>
            <person name="Nelson D."/>
            <person name="Lehrach H."/>
            <person name="Reinhardt R."/>
            <person name="Naylor S.L."/>
            <person name="Yang H."/>
            <person name="Olson M."/>
            <person name="Weinstock G."/>
            <person name="Gibbs R.A."/>
        </authorList>
    </citation>
    <scope>NUCLEOTIDE SEQUENCE [LARGE SCALE GENOMIC DNA]</scope>
</reference>
<reference key="4">
    <citation type="submission" date="2005-07" db="EMBL/GenBank/DDBJ databases">
        <authorList>
            <person name="Mural R.J."/>
            <person name="Istrail S."/>
            <person name="Sutton G."/>
            <person name="Florea L."/>
            <person name="Halpern A.L."/>
            <person name="Mobarry C.M."/>
            <person name="Lippert R."/>
            <person name="Walenz B."/>
            <person name="Shatkay H."/>
            <person name="Dew I."/>
            <person name="Miller J.R."/>
            <person name="Flanigan M.J."/>
            <person name="Edwards N.J."/>
            <person name="Bolanos R."/>
            <person name="Fasulo D."/>
            <person name="Halldorsson B.V."/>
            <person name="Hannenhalli S."/>
            <person name="Turner R."/>
            <person name="Yooseph S."/>
            <person name="Lu F."/>
            <person name="Nusskern D.R."/>
            <person name="Shue B.C."/>
            <person name="Zheng X.H."/>
            <person name="Zhong F."/>
            <person name="Delcher A.L."/>
            <person name="Huson D.H."/>
            <person name="Kravitz S.A."/>
            <person name="Mouchard L."/>
            <person name="Reinert K."/>
            <person name="Remington K.A."/>
            <person name="Clark A.G."/>
            <person name="Waterman M.S."/>
            <person name="Eichler E.E."/>
            <person name="Adams M.D."/>
            <person name="Hunkapiller M.W."/>
            <person name="Myers E.W."/>
            <person name="Venter J.C."/>
        </authorList>
    </citation>
    <scope>NUCLEOTIDE SEQUENCE [LARGE SCALE GENOMIC DNA]</scope>
</reference>
<reference key="5">
    <citation type="journal article" date="2004" name="Genome Res.">
        <title>The status, quality, and expansion of the NIH full-length cDNA project: the Mammalian Gene Collection (MGC).</title>
        <authorList>
            <consortium name="The MGC Project Team"/>
        </authorList>
    </citation>
    <scope>NUCLEOTIDE SEQUENCE [LARGE SCALE MRNA] (ISOFORM 1)</scope>
    <source>
        <tissue>Placenta</tissue>
    </source>
</reference>
<reference key="6">
    <citation type="journal article" date="1998" name="Biochem. Biophys. Res. Commun.">
        <title>Identification and characterization of a novel SH3-domain binding protein, Sab, which preferentially associates with Bruton's tyrosine kinase (Btk).</title>
        <authorList>
            <person name="Matsushita M."/>
            <person name="Yamadori T."/>
            <person name="Kato S."/>
            <person name="Takemoto Y."/>
            <person name="Inazawa J."/>
            <person name="Baba Y."/>
            <person name="Hashimoto S."/>
            <person name="Sekine S."/>
            <person name="Arai S."/>
            <person name="Kunikata T."/>
            <person name="Kurimoto M."/>
            <person name="Kishimoto T."/>
            <person name="Tsukada S."/>
        </authorList>
    </citation>
    <scope>NUCLEOTIDE SEQUENCE [MRNA] OF 10-455 (ISOFORM 1)</scope>
    <scope>FUNCTION</scope>
    <scope>INTERACTION WITH BTK</scope>
    <scope>TISSUE SPECIFICITY</scope>
    <source>
        <tissue>Placenta</tissue>
    </source>
</reference>
<reference key="7">
    <citation type="journal article" date="1999" name="Proc. Natl. Acad. Sci. U.S.A.">
        <title>Bruton's tyrosine kinase activity is negatively regulated by Sab, the Btk-SH3 domain-binding protein.</title>
        <authorList>
            <person name="Yamadori T."/>
            <person name="Baba Y."/>
            <person name="Mastushita M."/>
            <person name="Hashimoto S."/>
            <person name="Kurosaki M."/>
            <person name="Kurosaki T."/>
            <person name="Kishimoto T."/>
            <person name="Tsukada S."/>
        </authorList>
    </citation>
    <scope>INTERACTION WITH BTK</scope>
    <scope>FUNCTION</scope>
</reference>
<reference key="8">
    <citation type="journal article" date="2002" name="Biochem. J.">
        <title>A new c-Jun N-terminal kinase (JNK)-interacting protein, Sab (SH3BP5), associates with mitochondria.</title>
        <authorList>
            <person name="Wiltshire C."/>
            <person name="Matsushita M."/>
            <person name="Tsukada S."/>
            <person name="Gillespie D.A."/>
            <person name="May G.H."/>
        </authorList>
    </citation>
    <scope>INTERACTION WITH MAPK8; MAPK9 AND MAPK10</scope>
    <scope>SUBCELLULAR LOCATION</scope>
    <scope>MUTAGENESIS OF LEU-347; LEU-349; LEU-434 AND LEU-436</scope>
</reference>
<reference key="9">
    <citation type="journal article" date="2006" name="Nat. Biotechnol.">
        <title>A probability-based approach for high-throughput protein phosphorylation analysis and site localization.</title>
        <authorList>
            <person name="Beausoleil S.A."/>
            <person name="Villen J."/>
            <person name="Gerber S.A."/>
            <person name="Rush J."/>
            <person name="Gygi S.P."/>
        </authorList>
    </citation>
    <scope>PHOSPHORYLATION [LARGE SCALE ANALYSIS] AT SER-421</scope>
    <scope>IDENTIFICATION BY MASS SPECTROMETRY [LARGE SCALE ANALYSIS]</scope>
    <source>
        <tissue>Cervix carcinoma</tissue>
    </source>
</reference>
<reference key="10">
    <citation type="journal article" date="2008" name="Proc. Natl. Acad. Sci. U.S.A.">
        <title>A quantitative atlas of mitotic phosphorylation.</title>
        <authorList>
            <person name="Dephoure N."/>
            <person name="Zhou C."/>
            <person name="Villen J."/>
            <person name="Beausoleil S.A."/>
            <person name="Bakalarski C.E."/>
            <person name="Elledge S.J."/>
            <person name="Gygi S.P."/>
        </authorList>
    </citation>
    <scope>IDENTIFICATION BY MASS SPECTROMETRY [LARGE SCALE ANALYSIS]</scope>
    <source>
        <tissue>Cervix carcinoma</tissue>
    </source>
</reference>
<reference key="11">
    <citation type="journal article" date="2009" name="Anal. Chem.">
        <title>Lys-N and trypsin cover complementary parts of the phosphoproteome in a refined SCX-based approach.</title>
        <authorList>
            <person name="Gauci S."/>
            <person name="Helbig A.O."/>
            <person name="Slijper M."/>
            <person name="Krijgsveld J."/>
            <person name="Heck A.J."/>
            <person name="Mohammed S."/>
        </authorList>
    </citation>
    <scope>IDENTIFICATION BY MASS SPECTROMETRY [LARGE SCALE ANALYSIS]</scope>
</reference>
<reference key="12">
    <citation type="journal article" date="2010" name="Sci. Signal.">
        <title>Quantitative phosphoproteomics reveals widespread full phosphorylation site occupancy during mitosis.</title>
        <authorList>
            <person name="Olsen J.V."/>
            <person name="Vermeulen M."/>
            <person name="Santamaria A."/>
            <person name="Kumar C."/>
            <person name="Miller M.L."/>
            <person name="Jensen L.J."/>
            <person name="Gnad F."/>
            <person name="Cox J."/>
            <person name="Jensen T.S."/>
            <person name="Nigg E.A."/>
            <person name="Brunak S."/>
            <person name="Mann M."/>
        </authorList>
    </citation>
    <scope>IDENTIFICATION BY MASS SPECTROMETRY [LARGE SCALE ANALYSIS]</scope>
    <source>
        <tissue>Cervix carcinoma</tissue>
    </source>
</reference>
<reference key="13">
    <citation type="journal article" date="2013" name="J. Proteome Res.">
        <title>Toward a comprehensive characterization of a human cancer cell phosphoproteome.</title>
        <authorList>
            <person name="Zhou H."/>
            <person name="Di Palma S."/>
            <person name="Preisinger C."/>
            <person name="Peng M."/>
            <person name="Polat A.N."/>
            <person name="Heck A.J."/>
            <person name="Mohammed S."/>
        </authorList>
    </citation>
    <scope>PHOSPHORYLATION [LARGE SCALE ANALYSIS] AT SER-421</scope>
    <scope>IDENTIFICATION BY MASS SPECTROMETRY [LARGE SCALE ANALYSIS]</scope>
    <source>
        <tissue>Erythroleukemia</tissue>
    </source>
</reference>
<reference key="14">
    <citation type="journal article" date="2015" name="Dev. Cell">
        <title>REI-1 is a guanine nucleotide exchange factor regulating RAB-11 localization and function in C. elegans embryos.</title>
        <authorList>
            <person name="Sakaguchi A."/>
            <person name="Sato M."/>
            <person name="Sato K."/>
            <person name="Gengyo-Ando K."/>
            <person name="Yorimitsu T."/>
            <person name="Nakai J."/>
            <person name="Hara T."/>
            <person name="Sato K."/>
            <person name="Sato K."/>
        </authorList>
    </citation>
    <scope>INTERACTION WITH RAB11A</scope>
    <scope>FUNCTION</scope>
</reference>
<reference evidence="11" key="15">
    <citation type="journal article" date="2018" name="Nat. Commun.">
        <title>Structural determinants of Rab11 activation by the guanine nucleotide exchange factor SH3BP5.</title>
        <authorList>
            <person name="Jenkins M.L."/>
            <person name="Margaria J.P."/>
            <person name="Stariha J.T.B."/>
            <person name="Hoffmann R.M."/>
            <person name="McPhail J.A."/>
            <person name="Hamelin D.J."/>
            <person name="Boulanger M.J."/>
            <person name="Hirsch E."/>
            <person name="Burke J.E."/>
        </authorList>
    </citation>
    <scope>X-RAY CRYSTALLOGRAPHY (3.10 ANGSTROMS) OF 1-265 IN COMPLEX WITH RAB11A</scope>
    <scope>FUNCTION</scope>
    <scope>COILED COIL</scope>
    <scope>DOMAIN</scope>
    <scope>SUBCELLULAR LOCATION</scope>
    <scope>MUTAGENESIS OF 52-LEU--GLN-54 AND 250-LEU-GLU-251</scope>
</reference>
<keyword id="KW-0002">3D-structure</keyword>
<keyword id="KW-0025">Alternative splicing</keyword>
<keyword id="KW-0175">Coiled coil</keyword>
<keyword id="KW-0968">Cytoplasmic vesicle</keyword>
<keyword id="KW-0344">Guanine-nucleotide releasing factor</keyword>
<keyword id="KW-0472">Membrane</keyword>
<keyword id="KW-0496">Mitochondrion</keyword>
<keyword id="KW-0597">Phosphoprotein</keyword>
<keyword id="KW-1267">Proteomics identification</keyword>
<keyword id="KW-1185">Reference proteome</keyword>
<keyword id="KW-0729">SH3-binding</keyword>
<accession>O60239</accession>
<accession>B3KQW6</accession>
<accession>Q5JWV9</accession>
<protein>
    <recommendedName>
        <fullName>SH3 domain-binding protein 5</fullName>
        <shortName>SH3BP-5</shortName>
    </recommendedName>
    <alternativeName>
        <fullName>SH3 domain-binding protein that preferentially associates with BTK</fullName>
    </alternativeName>
</protein>